<organism>
    <name type="scientific">Zea mays</name>
    <name type="common">Maize</name>
    <dbReference type="NCBI Taxonomy" id="4577"/>
    <lineage>
        <taxon>Eukaryota</taxon>
        <taxon>Viridiplantae</taxon>
        <taxon>Streptophyta</taxon>
        <taxon>Embryophyta</taxon>
        <taxon>Tracheophyta</taxon>
        <taxon>Spermatophyta</taxon>
        <taxon>Magnoliopsida</taxon>
        <taxon>Liliopsida</taxon>
        <taxon>Poales</taxon>
        <taxon>Poaceae</taxon>
        <taxon>PACMAD clade</taxon>
        <taxon>Panicoideae</taxon>
        <taxon>Andropogonodae</taxon>
        <taxon>Andropogoneae</taxon>
        <taxon>Tripsacinae</taxon>
        <taxon>Zea</taxon>
    </lineage>
</organism>
<geneLocation type="mitochondrion"/>
<name>NU3M_MAIZE</name>
<evidence type="ECO:0000250" key="1"/>
<evidence type="ECO:0000255" key="2"/>
<evidence type="ECO:0000269" key="3">
    <source>
    </source>
</evidence>
<evidence type="ECO:0000305" key="4"/>
<dbReference type="EC" id="7.1.1.2"/>
<dbReference type="EMBL" id="X14709">
    <property type="protein sequence ID" value="CAA32833.1"/>
    <property type="status" value="ALT_SEQ"/>
    <property type="molecule type" value="Genomic_DNA"/>
</dbReference>
<dbReference type="PIR" id="S70025">
    <property type="entry name" value="DNZMU3"/>
</dbReference>
<dbReference type="SMR" id="P16265"/>
<dbReference type="MaizeGDB" id="69626"/>
<dbReference type="GO" id="GO:0031966">
    <property type="term" value="C:mitochondrial membrane"/>
    <property type="evidence" value="ECO:0007669"/>
    <property type="project" value="UniProtKB-SubCell"/>
</dbReference>
<dbReference type="GO" id="GO:0030964">
    <property type="term" value="C:NADH dehydrogenase complex"/>
    <property type="evidence" value="ECO:0000318"/>
    <property type="project" value="GO_Central"/>
</dbReference>
<dbReference type="GO" id="GO:0008137">
    <property type="term" value="F:NADH dehydrogenase (ubiquinone) activity"/>
    <property type="evidence" value="ECO:0000318"/>
    <property type="project" value="GO_Central"/>
</dbReference>
<dbReference type="FunFam" id="1.20.58.1610:FF:000006">
    <property type="entry name" value="NADH-ubiquinone oxidoreductase chain 3"/>
    <property type="match status" value="1"/>
</dbReference>
<dbReference type="Gene3D" id="1.20.58.1610">
    <property type="entry name" value="NADH:ubiquinone/plastoquinone oxidoreductase, chain 3"/>
    <property type="match status" value="1"/>
</dbReference>
<dbReference type="HAMAP" id="MF_01394">
    <property type="entry name" value="NDH1_NuoA"/>
    <property type="match status" value="1"/>
</dbReference>
<dbReference type="InterPro" id="IPR023043">
    <property type="entry name" value="NAD(P)H_OxRDtase_bac/plastid"/>
</dbReference>
<dbReference type="InterPro" id="IPR000440">
    <property type="entry name" value="NADH_UbQ/plastoQ_OxRdtase_su3"/>
</dbReference>
<dbReference type="InterPro" id="IPR038430">
    <property type="entry name" value="NDAH_ubi_oxred_su3_sf"/>
</dbReference>
<dbReference type="PANTHER" id="PTHR11058">
    <property type="entry name" value="NADH-UBIQUINONE OXIDOREDUCTASE CHAIN 3"/>
    <property type="match status" value="1"/>
</dbReference>
<dbReference type="PANTHER" id="PTHR11058:SF9">
    <property type="entry name" value="NADH-UBIQUINONE OXIDOREDUCTASE CHAIN 3"/>
    <property type="match status" value="1"/>
</dbReference>
<dbReference type="Pfam" id="PF00507">
    <property type="entry name" value="Oxidored_q4"/>
    <property type="match status" value="1"/>
</dbReference>
<sequence>MLEFAPICIYLVISLLVSLILLGVPFLFASNSSTYPEKLSAYECGFDPFGDARSRFDIRFYLVSILFIIFDLEVTFFFPWAVSLNKIDLFGFWSMMAFLLILFIGSLYEWKRGALDWE</sequence>
<comment type="function">
    <text evidence="1">Core subunit of the mitochondrial membrane respiratory chain NADH dehydrogenase (Complex I) that is believed to belong to the minimal assembly required for catalysis. Complex I functions in the transfer of electrons from NADH to the respiratory chain. The immediate electron acceptor for the enzyme is believed to be ubiquinone (By similarity).</text>
</comment>
<comment type="catalytic activity">
    <reaction>
        <text>a ubiquinone + NADH + 5 H(+)(in) = a ubiquinol + NAD(+) + 4 H(+)(out)</text>
        <dbReference type="Rhea" id="RHEA:29091"/>
        <dbReference type="Rhea" id="RHEA-COMP:9565"/>
        <dbReference type="Rhea" id="RHEA-COMP:9566"/>
        <dbReference type="ChEBI" id="CHEBI:15378"/>
        <dbReference type="ChEBI" id="CHEBI:16389"/>
        <dbReference type="ChEBI" id="CHEBI:17976"/>
        <dbReference type="ChEBI" id="CHEBI:57540"/>
        <dbReference type="ChEBI" id="CHEBI:57945"/>
        <dbReference type="EC" id="7.1.1.2"/>
    </reaction>
</comment>
<comment type="subcellular location">
    <subcellularLocation>
        <location evidence="1">Mitochondrion membrane</location>
        <topology evidence="1">Multi-pass membrane protein</topology>
    </subcellularLocation>
</comment>
<comment type="RNA editing">
    <location>
        <position position="2" evidence="3"/>
    </location>
    <location>
        <position position="15" evidence="3"/>
    </location>
    <location>
        <position position="21" evidence="3"/>
    </location>
    <location>
        <position position="27" evidence="3"/>
    </location>
    <location>
        <position position="46" evidence="3"/>
    </location>
    <location>
        <position position="49" evidence="3"/>
    </location>
    <location>
        <position position="62" evidence="3"/>
    </location>
    <location>
        <position position="64" evidence="3"/>
    </location>
    <location>
        <position position="70" evidence="3"/>
    </location>
    <location>
        <position position="72" evidence="3"/>
    </location>
    <location>
        <position position="77" evidence="3"/>
    </location>
    <location>
        <position position="83" evidence="3"/>
    </location>
    <location>
        <position position="84" evidence="3"/>
    </location>
    <location>
        <position position="92" evidence="3"/>
    </location>
    <location>
        <position position="103" evidence="3"/>
    </location>
    <location>
        <position position="115" evidence="3"/>
    </location>
    <location>
        <position position="117" evidence="3"/>
    </location>
</comment>
<comment type="similarity">
    <text evidence="4">Belongs to the complex I subunit 3 family.</text>
</comment>
<protein>
    <recommendedName>
        <fullName>NADH-ubiquinone oxidoreductase chain 3</fullName>
        <ecNumber>7.1.1.2</ecNumber>
    </recommendedName>
    <alternativeName>
        <fullName>NADH dehydrogenase subunit 3</fullName>
    </alternativeName>
</protein>
<proteinExistence type="evidence at transcript level"/>
<accession>P16265</accession>
<reference key="1">
    <citation type="journal article" date="1988" name="Mol. Gen. Genet.">
        <title>The genes coding for subunit 3 of NADH dehydrogenase and for ribosomal protein S12 are present in the wheat and maize mitochondrial genomes and are co-transcribed.</title>
        <authorList>
            <person name="Gualberto J.M."/>
            <person name="Wintz H."/>
            <person name="Weil J.-H."/>
            <person name="Grienenberger J.-M."/>
        </authorList>
    </citation>
    <scope>NUCLEOTIDE SEQUENCE [GENOMIC DNA]</scope>
    <source>
        <strain>cv. WF9-N</strain>
    </source>
</reference>
<reference key="2">
    <citation type="journal article" date="1996" name="Curr. Genet.">
        <title>Developmental- and tissue-specificity of RNA editing in mitochondria of suspension-cultured maize cells and seedlings.</title>
        <authorList>
            <person name="Grosskopf D."/>
            <person name="Mulligan R.M."/>
        </authorList>
    </citation>
    <scope>NUCLEOTIDE SEQUENCE [GENOMIC DNA]</scope>
    <scope>RNA EDITING</scope>
    <source>
        <strain>cv. Black Mexican Sweet</strain>
    </source>
</reference>
<gene>
    <name type="primary">ND3</name>
    <name type="synonym">NAD3</name>
</gene>
<keyword id="KW-0249">Electron transport</keyword>
<keyword id="KW-0472">Membrane</keyword>
<keyword id="KW-0496">Mitochondrion</keyword>
<keyword id="KW-0520">NAD</keyword>
<keyword id="KW-0679">Respiratory chain</keyword>
<keyword id="KW-0691">RNA editing</keyword>
<keyword id="KW-1278">Translocase</keyword>
<keyword id="KW-0812">Transmembrane</keyword>
<keyword id="KW-1133">Transmembrane helix</keyword>
<keyword id="KW-0813">Transport</keyword>
<keyword id="KW-0830">Ubiquinone</keyword>
<feature type="chain" id="PRO_0000117761" description="NADH-ubiquinone oxidoreductase chain 3">
    <location>
        <begin position="1"/>
        <end position="118"/>
    </location>
</feature>
<feature type="transmembrane region" description="Helical" evidence="2">
    <location>
        <begin position="9"/>
        <end position="29"/>
    </location>
</feature>
<feature type="transmembrane region" description="Helical" evidence="2">
    <location>
        <begin position="62"/>
        <end position="82"/>
    </location>
</feature>
<feature type="transmembrane region" description="Helical" evidence="2">
    <location>
        <begin position="87"/>
        <end position="107"/>
    </location>
</feature>